<dbReference type="EC" id="1.-.-.-" evidence="2"/>
<dbReference type="EMBL" id="JOMC01000221">
    <property type="protein sequence ID" value="KIA75361.1"/>
    <property type="molecule type" value="Genomic_DNA"/>
</dbReference>
<dbReference type="SMR" id="A0A0C1BUX3"/>
<dbReference type="Proteomes" id="UP000053475">
    <property type="component" value="Unassembled WGS sequence"/>
</dbReference>
<dbReference type="GO" id="GO:0071949">
    <property type="term" value="F:FAD binding"/>
    <property type="evidence" value="ECO:0007669"/>
    <property type="project" value="InterPro"/>
</dbReference>
<dbReference type="GO" id="GO:0016491">
    <property type="term" value="F:oxidoreductase activity"/>
    <property type="evidence" value="ECO:0007669"/>
    <property type="project" value="UniProtKB-KW"/>
</dbReference>
<dbReference type="Gene3D" id="3.30.465.10">
    <property type="match status" value="1"/>
</dbReference>
<dbReference type="InterPro" id="IPR012951">
    <property type="entry name" value="BBE"/>
</dbReference>
<dbReference type="InterPro" id="IPR016166">
    <property type="entry name" value="FAD-bd_PCMH"/>
</dbReference>
<dbReference type="InterPro" id="IPR036318">
    <property type="entry name" value="FAD-bd_PCMH-like_sf"/>
</dbReference>
<dbReference type="InterPro" id="IPR016169">
    <property type="entry name" value="FAD-bd_PCMH_sub2"/>
</dbReference>
<dbReference type="InterPro" id="IPR050432">
    <property type="entry name" value="FAD-linked_Oxidoreductases_BP"/>
</dbReference>
<dbReference type="InterPro" id="IPR006094">
    <property type="entry name" value="Oxid_FAD_bind_N"/>
</dbReference>
<dbReference type="PANTHER" id="PTHR13878:SF155">
    <property type="entry name" value="ALCOHOL OXIDASE, PUTATIVE (AFU_ORTHOLOGUE AFUA_4G00430)-RELATED"/>
    <property type="match status" value="1"/>
</dbReference>
<dbReference type="PANTHER" id="PTHR13878">
    <property type="entry name" value="GULONOLACTONE OXIDASE"/>
    <property type="match status" value="1"/>
</dbReference>
<dbReference type="Pfam" id="PF08031">
    <property type="entry name" value="BBE"/>
    <property type="match status" value="1"/>
</dbReference>
<dbReference type="Pfam" id="PF01565">
    <property type="entry name" value="FAD_binding_4"/>
    <property type="match status" value="1"/>
</dbReference>
<dbReference type="SUPFAM" id="SSF56176">
    <property type="entry name" value="FAD-binding/transporter-associated domain-like"/>
    <property type="match status" value="1"/>
</dbReference>
<dbReference type="PROSITE" id="PS51387">
    <property type="entry name" value="FAD_PCMH"/>
    <property type="match status" value="1"/>
</dbReference>
<reference key="1">
    <citation type="submission" date="2014-11" db="EMBL/GenBank/DDBJ databases">
        <title>Genomics derived discovery of secondary metabolites biosynthetic gene clusters in Aspergillus ustus.</title>
        <authorList>
            <person name="Pi B."/>
            <person name="Dai F."/>
            <person name="Song X."/>
            <person name="Zhu C."/>
            <person name="Li H."/>
            <person name="Yu D."/>
        </authorList>
    </citation>
    <scope>NUCLEOTIDE SEQUENCE [LARGE SCALE GENOMIC DNA]</scope>
    <source>
        <strain>3.3904</strain>
    </source>
</reference>
<reference key="2">
    <citation type="journal article" date="2023" name="Org. Lett.">
        <title>Biosynthesis of p-terphenyls in Aspergillus ustus implies enzymatic reductive dehydration and spontaneous dibenzofuran formation.</title>
        <authorList>
            <person name="Janzen D.J."/>
            <person name="Zhou J."/>
            <person name="Li S.M."/>
        </authorList>
    </citation>
    <scope>FUNCTION</scope>
    <scope>CATALYTIC ACTIVITY</scope>
    <scope>DISRUPTION PHENOTYPE</scope>
</reference>
<gene>
    <name evidence="3" type="primary">ucdF</name>
    <name type="ORF">HK57_00190</name>
</gene>
<keyword id="KW-0560">Oxidoreductase</keyword>
<keyword id="KW-1185">Reference proteome</keyword>
<accession>A0A0C1BUX3</accession>
<name>UCDF_ASPUT</name>
<proteinExistence type="evidence at protein level"/>
<feature type="chain" id="PRO_0000460400" description="Flavin-dependent oxygenase ucdF">
    <location>
        <begin position="1"/>
        <end position="546"/>
    </location>
</feature>
<feature type="domain" description="FAD-binding PCMH-type" evidence="1">
    <location>
        <begin position="81"/>
        <end position="263"/>
    </location>
</feature>
<evidence type="ECO:0000255" key="1">
    <source>
        <dbReference type="PROSITE-ProRule" id="PRU00718"/>
    </source>
</evidence>
<evidence type="ECO:0000269" key="2">
    <source>
    </source>
</evidence>
<evidence type="ECO:0000303" key="3">
    <source>
    </source>
</evidence>
<evidence type="ECO:0000305" key="4"/>
<sequence length="546" mass="59935">MHRWTVFNEEINGNLVRVRPVGSVCHGIEFDEMACASVKSSTHNSLWRISEPGALQATNWESEHGFGSCVIDSSKDTPCRQGRIPYYAVMAQTPQHIQTAIQFARHHNLRVAIRNTGHDAIGRSSGRGSLQINVSGLKGIHFLDDFIPQGGYESQGQAVTVGAGVLGIELLTASRIQGVNVVTGTCSSVAATGGYLQGGGTSMLGPAYGMASDNALEFHVITAMGDTIVVNQYQNTDLFWSLRGGGGGTFGVVVNTTIRTFPDVPAVHFLLSSTIHRDTETSLDAEQSLWEITAEIAKLLPDLKRFNNATSSIIVPIRMEDRVTVTAEILLVNTSDIHSAGTYFTRLIKTLDSQGFPYTSNLTLYPQLSTYLSQQRVLDRAGYGIIEGSVLVSEDLFFHPDGISDIMLVLSSLQLEVGDSVEIFMCAGGQVKANKGRVTTALLPTWREAVLLLTIRRTLPPSSMIQRMRNSQLPRLRSLESPYLGSYLNVADPDEPDFRKAFWGDHYSRLYQIKHDRDPNGLFIVRIGVGSEDWDMDGICQFSKMQ</sequence>
<protein>
    <recommendedName>
        <fullName evidence="3">Flavin-dependent oxygenase ucdF</fullName>
        <ecNumber evidence="2">1.-.-.-</ecNumber>
    </recommendedName>
    <alternativeName>
        <fullName evidence="3">Uscandidusin biosynthesis cluster protein F</fullName>
    </alternativeName>
</protein>
<comment type="function">
    <text evidence="2">Nonribosomal peptide synthetase that mediates the biosynthesis of usterphenyllins and uscandidusins, p-terphenyl derivatives (PubMed:37607357). The function of ucdF within the pathway still remains to be determined (PubMed:37607357). UcdE further prenylates position C-14 of ring C of usterphenyllin B to form usterphenyllin A (PubMed:37607357). The pathway begin with the biosynthesis of 4-hydroxyphenylpyruvate (HPPA) from L-tyrosine, possibly by the aminotransferase ucdG. The nonribosomal peptide synthetase ucdA then condenses two HPPA units to produce atromentin. The key step in this pathway is the reduction and dehydration of atromentin to form a terphenyl triol intermediate, performed by the NAD-dependent dehydrogenase ucdB. Further O-methylation by the methyltransferase ucdC forms terphenyllin carrying two methoxy moieties at C-9 and C-12, and subsequent dihydroxylation at C-3 of ring A and C-15 of ring C by the flavin-dependent oxygenase ucdD leads to 3,15-dihydroxyterphenyllin. Prenylation by ucdE at position C-5 of ring A forms usterphenyllin B, and is followed by a second prenylation at position C-14 of ring C to form usterphenyllin A. The following furan ring formation that leads to uscandidusins A and B was proven to be an unexpected spontaneous non-enzymatic reaction (PubMed:37607357).</text>
</comment>
<comment type="disruption phenotype">
    <text evidence="2">Does not seem to affect the production of usterphenyllins and uscandidusins.</text>
</comment>
<comment type="similarity">
    <text evidence="4">Belongs to the oxygen-dependent FAD-linked oxidoreductase family.</text>
</comment>
<organism>
    <name type="scientific">Aspergillus ustus</name>
    <dbReference type="NCBI Taxonomy" id="40382"/>
    <lineage>
        <taxon>Eukaryota</taxon>
        <taxon>Fungi</taxon>
        <taxon>Dikarya</taxon>
        <taxon>Ascomycota</taxon>
        <taxon>Pezizomycotina</taxon>
        <taxon>Eurotiomycetes</taxon>
        <taxon>Eurotiomycetidae</taxon>
        <taxon>Eurotiales</taxon>
        <taxon>Aspergillaceae</taxon>
        <taxon>Aspergillus</taxon>
        <taxon>Aspergillus subgen. Nidulantes</taxon>
    </lineage>
</organism>